<sequence length="392" mass="40697">MTESAAPSPRCVAAILLAGGRGLRAGFGRPKQLEWLCGKPVLRWSLDVLAGYPGLSGGVLVANHDVMAATYPLPEGWMAADPGVERQQSVANALSALTDWPDDAVVLVHDAARPGVDSAVVDRLLAALDGADAAIPVLPVPDTLVEAADGAAGAVVARDRLARVQTPQAFRLGTLRRAHAEASGAAATDDAQLVRSLGVSVATVEGDARLHKLTYAADMAILAGLLGTKDMMRTAVGMGYDVHRLVEGKPLWIGGIEIAHSHGLEGHSDADVGLHALTDAILGALGDGDIGDHFPPSDPQWRGAASHHFLSFAGERVAANGGRIGHLDLTIIAEAPRIGPHRVAIRDRIAEILAIPAGRVSVKATTTERLGFTGRREGIAAQAVATIQLPET</sequence>
<name>ISPDF_SPHAL</name>
<feature type="chain" id="PRO_0000292861" description="Bifunctional enzyme IspD/IspF">
    <location>
        <begin position="1"/>
        <end position="392"/>
    </location>
</feature>
<feature type="region of interest" description="2-C-methyl-D-erythritol 4-phosphate cytidylyltransferase" evidence="1">
    <location>
        <begin position="1"/>
        <end position="235"/>
    </location>
</feature>
<feature type="region of interest" description="2-C-methyl-D-erythritol 4-phosphate cytidylyltransferase">
    <location>
        <begin position="1"/>
        <end position="234"/>
    </location>
</feature>
<feature type="region of interest" description="2-C-methyl-D-erythritol 2,4-cyclodiphosphate synthase" evidence="1">
    <location>
        <begin position="235"/>
        <end position="392"/>
    </location>
</feature>
<feature type="binding site" evidence="1">
    <location>
        <begin position="241"/>
        <end position="243"/>
    </location>
    <ligand>
        <name>4-CDP-2-C-methyl-D-erythritol 2-phosphate</name>
        <dbReference type="ChEBI" id="CHEBI:57919"/>
    </ligand>
</feature>
<feature type="binding site" evidence="1">
    <location>
        <position position="241"/>
    </location>
    <ligand>
        <name>a divalent metal cation</name>
        <dbReference type="ChEBI" id="CHEBI:60240"/>
    </ligand>
</feature>
<feature type="binding site" evidence="1">
    <location>
        <position position="243"/>
    </location>
    <ligand>
        <name>a divalent metal cation</name>
        <dbReference type="ChEBI" id="CHEBI:60240"/>
    </ligand>
</feature>
<feature type="binding site" evidence="1">
    <location>
        <begin position="267"/>
        <end position="268"/>
    </location>
    <ligand>
        <name>4-CDP-2-C-methyl-D-erythritol 2-phosphate</name>
        <dbReference type="ChEBI" id="CHEBI:57919"/>
    </ligand>
</feature>
<feature type="binding site" evidence="1">
    <location>
        <position position="275"/>
    </location>
    <ligand>
        <name>a divalent metal cation</name>
        <dbReference type="ChEBI" id="CHEBI:60240"/>
    </ligand>
</feature>
<feature type="binding site" evidence="1">
    <location>
        <begin position="289"/>
        <end position="291"/>
    </location>
    <ligand>
        <name>4-CDP-2-C-methyl-D-erythritol 2-phosphate</name>
        <dbReference type="ChEBI" id="CHEBI:57919"/>
    </ligand>
</feature>
<feature type="binding site" evidence="1">
    <location>
        <begin position="365"/>
        <end position="368"/>
    </location>
    <ligand>
        <name>4-CDP-2-C-methyl-D-erythritol 2-phosphate</name>
        <dbReference type="ChEBI" id="CHEBI:57919"/>
    </ligand>
</feature>
<feature type="binding site" evidence="1">
    <location>
        <position position="372"/>
    </location>
    <ligand>
        <name>4-CDP-2-C-methyl-D-erythritol 2-phosphate</name>
        <dbReference type="ChEBI" id="CHEBI:57919"/>
    </ligand>
</feature>
<feature type="binding site" evidence="1">
    <location>
        <position position="375"/>
    </location>
    <ligand>
        <name>4-CDP-2-C-methyl-D-erythritol 2-phosphate</name>
        <dbReference type="ChEBI" id="CHEBI:57919"/>
    </ligand>
</feature>
<feature type="site" description="Transition state stabilizer" evidence="1">
    <location>
        <position position="24"/>
    </location>
</feature>
<feature type="site" description="Transition state stabilizer" evidence="1">
    <location>
        <position position="31"/>
    </location>
</feature>
<feature type="site" description="Positions MEP for the nucleophilic attack" evidence="1">
    <location>
        <position position="158"/>
    </location>
</feature>
<feature type="site" description="Positions MEP for the nucleophilic attack" evidence="1">
    <location>
        <position position="212"/>
    </location>
</feature>
<feature type="site" description="Transition state stabilizer" evidence="1">
    <location>
        <position position="267"/>
    </location>
</feature>
<feature type="site" description="Transition state stabilizer" evidence="1">
    <location>
        <position position="366"/>
    </location>
</feature>
<gene>
    <name evidence="1" type="primary">ispDF</name>
    <name type="ordered locus">Sala_1278</name>
</gene>
<accession>Q1GTN0</accession>
<protein>
    <recommendedName>
        <fullName evidence="1">Bifunctional enzyme IspD/IspF</fullName>
    </recommendedName>
    <domain>
        <recommendedName>
            <fullName evidence="1">2-C-methyl-D-erythritol 4-phosphate cytidylyltransferase</fullName>
            <ecNumber evidence="1">2.7.7.60</ecNumber>
        </recommendedName>
        <alternativeName>
            <fullName evidence="1">4-diphosphocytidyl-2C-methyl-D-erythritol synthase</fullName>
        </alternativeName>
        <alternativeName>
            <fullName evidence="1">MEP cytidylyltransferase</fullName>
            <shortName evidence="1">MCT</shortName>
        </alternativeName>
    </domain>
    <domain>
        <recommendedName>
            <fullName evidence="1">2-C-methyl-D-erythritol 2,4-cyclodiphosphate synthase</fullName>
            <shortName evidence="1">MECDP-synthase</shortName>
            <shortName evidence="1">MECPP-synthase</shortName>
            <shortName evidence="1">MECPS</shortName>
            <ecNumber evidence="1">4.6.1.12</ecNumber>
        </recommendedName>
    </domain>
</protein>
<keyword id="KW-0414">Isoprene biosynthesis</keyword>
<keyword id="KW-0456">Lyase</keyword>
<keyword id="KW-0479">Metal-binding</keyword>
<keyword id="KW-0511">Multifunctional enzyme</keyword>
<keyword id="KW-0548">Nucleotidyltransferase</keyword>
<keyword id="KW-1185">Reference proteome</keyword>
<keyword id="KW-0808">Transferase</keyword>
<reference key="1">
    <citation type="journal article" date="2009" name="Proc. Natl. Acad. Sci. U.S.A.">
        <title>The genomic basis of trophic strategy in marine bacteria.</title>
        <authorList>
            <person name="Lauro F.M."/>
            <person name="McDougald D."/>
            <person name="Thomas T."/>
            <person name="Williams T.J."/>
            <person name="Egan S."/>
            <person name="Rice S."/>
            <person name="DeMaere M.Z."/>
            <person name="Ting L."/>
            <person name="Ertan H."/>
            <person name="Johnson J."/>
            <person name="Ferriera S."/>
            <person name="Lapidus A."/>
            <person name="Anderson I."/>
            <person name="Kyrpides N."/>
            <person name="Munk A.C."/>
            <person name="Detter C."/>
            <person name="Han C.S."/>
            <person name="Brown M.V."/>
            <person name="Robb F.T."/>
            <person name="Kjelleberg S."/>
            <person name="Cavicchioli R."/>
        </authorList>
    </citation>
    <scope>NUCLEOTIDE SEQUENCE [LARGE SCALE GENOMIC DNA]</scope>
    <source>
        <strain>DSM 13593 / LMG 18877 / RB2256</strain>
    </source>
</reference>
<organism>
    <name type="scientific">Sphingopyxis alaskensis (strain DSM 13593 / LMG 18877 / RB2256)</name>
    <name type="common">Sphingomonas alaskensis</name>
    <dbReference type="NCBI Taxonomy" id="317655"/>
    <lineage>
        <taxon>Bacteria</taxon>
        <taxon>Pseudomonadati</taxon>
        <taxon>Pseudomonadota</taxon>
        <taxon>Alphaproteobacteria</taxon>
        <taxon>Sphingomonadales</taxon>
        <taxon>Sphingomonadaceae</taxon>
        <taxon>Sphingopyxis</taxon>
    </lineage>
</organism>
<dbReference type="EC" id="2.7.7.60" evidence="1"/>
<dbReference type="EC" id="4.6.1.12" evidence="1"/>
<dbReference type="EMBL" id="CP000356">
    <property type="protein sequence ID" value="ABF52992.1"/>
    <property type="molecule type" value="Genomic_DNA"/>
</dbReference>
<dbReference type="RefSeq" id="WP_011541575.1">
    <property type="nucleotide sequence ID" value="NC_008048.1"/>
</dbReference>
<dbReference type="SMR" id="Q1GTN0"/>
<dbReference type="STRING" id="317655.Sala_1278"/>
<dbReference type="KEGG" id="sal:Sala_1278"/>
<dbReference type="eggNOG" id="COG0245">
    <property type="taxonomic scope" value="Bacteria"/>
</dbReference>
<dbReference type="eggNOG" id="COG1211">
    <property type="taxonomic scope" value="Bacteria"/>
</dbReference>
<dbReference type="HOGENOM" id="CLU_042800_2_3_5"/>
<dbReference type="OrthoDB" id="9804336at2"/>
<dbReference type="UniPathway" id="UPA00056">
    <property type="reaction ID" value="UER00093"/>
</dbReference>
<dbReference type="UniPathway" id="UPA00056">
    <property type="reaction ID" value="UER00095"/>
</dbReference>
<dbReference type="Proteomes" id="UP000006578">
    <property type="component" value="Chromosome"/>
</dbReference>
<dbReference type="GO" id="GO:0008685">
    <property type="term" value="F:2-C-methyl-D-erythritol 2,4-cyclodiphosphate synthase activity"/>
    <property type="evidence" value="ECO:0007669"/>
    <property type="project" value="UniProtKB-UniRule"/>
</dbReference>
<dbReference type="GO" id="GO:0050518">
    <property type="term" value="F:2-C-methyl-D-erythritol 4-phosphate cytidylyltransferase activity"/>
    <property type="evidence" value="ECO:0007669"/>
    <property type="project" value="UniProtKB-UniRule"/>
</dbReference>
<dbReference type="GO" id="GO:0046872">
    <property type="term" value="F:metal ion binding"/>
    <property type="evidence" value="ECO:0007669"/>
    <property type="project" value="UniProtKB-KW"/>
</dbReference>
<dbReference type="GO" id="GO:0019288">
    <property type="term" value="P:isopentenyl diphosphate biosynthetic process, methylerythritol 4-phosphate pathway"/>
    <property type="evidence" value="ECO:0007669"/>
    <property type="project" value="UniProtKB-UniRule"/>
</dbReference>
<dbReference type="GO" id="GO:0016114">
    <property type="term" value="P:terpenoid biosynthetic process"/>
    <property type="evidence" value="ECO:0007669"/>
    <property type="project" value="InterPro"/>
</dbReference>
<dbReference type="CDD" id="cd02516">
    <property type="entry name" value="CDP-ME_synthetase"/>
    <property type="match status" value="1"/>
</dbReference>
<dbReference type="CDD" id="cd00554">
    <property type="entry name" value="MECDP_synthase"/>
    <property type="match status" value="1"/>
</dbReference>
<dbReference type="Gene3D" id="3.30.1330.50">
    <property type="entry name" value="2-C-methyl-D-erythritol 2,4-cyclodiphosphate synthase"/>
    <property type="match status" value="1"/>
</dbReference>
<dbReference type="Gene3D" id="3.90.550.10">
    <property type="entry name" value="Spore Coat Polysaccharide Biosynthesis Protein SpsA, Chain A"/>
    <property type="match status" value="1"/>
</dbReference>
<dbReference type="HAMAP" id="MF_00108">
    <property type="entry name" value="IspD"/>
    <property type="match status" value="1"/>
</dbReference>
<dbReference type="HAMAP" id="MF_01520">
    <property type="entry name" value="IspDF"/>
    <property type="match status" value="1"/>
</dbReference>
<dbReference type="HAMAP" id="MF_00107">
    <property type="entry name" value="IspF"/>
    <property type="match status" value="1"/>
</dbReference>
<dbReference type="InterPro" id="IPR001228">
    <property type="entry name" value="IspD"/>
</dbReference>
<dbReference type="InterPro" id="IPR026596">
    <property type="entry name" value="IspD/F"/>
</dbReference>
<dbReference type="InterPro" id="IPR034683">
    <property type="entry name" value="IspD/TarI"/>
</dbReference>
<dbReference type="InterPro" id="IPR018294">
    <property type="entry name" value="ISPD_synthase_CS"/>
</dbReference>
<dbReference type="InterPro" id="IPR003526">
    <property type="entry name" value="MECDP_synthase"/>
</dbReference>
<dbReference type="InterPro" id="IPR020555">
    <property type="entry name" value="MECDP_synthase_CS"/>
</dbReference>
<dbReference type="InterPro" id="IPR036571">
    <property type="entry name" value="MECDP_synthase_sf"/>
</dbReference>
<dbReference type="InterPro" id="IPR029044">
    <property type="entry name" value="Nucleotide-diphossugar_trans"/>
</dbReference>
<dbReference type="NCBIfam" id="TIGR00453">
    <property type="entry name" value="ispD"/>
    <property type="match status" value="1"/>
</dbReference>
<dbReference type="NCBIfam" id="TIGR00151">
    <property type="entry name" value="ispF"/>
    <property type="match status" value="1"/>
</dbReference>
<dbReference type="PANTHER" id="PTHR43181">
    <property type="entry name" value="2-C-METHYL-D-ERYTHRITOL 2,4-CYCLODIPHOSPHATE SYNTHASE, CHLOROPLASTIC"/>
    <property type="match status" value="1"/>
</dbReference>
<dbReference type="PANTHER" id="PTHR43181:SF1">
    <property type="entry name" value="2-C-METHYL-D-ERYTHRITOL 2,4-CYCLODIPHOSPHATE SYNTHASE, CHLOROPLASTIC"/>
    <property type="match status" value="1"/>
</dbReference>
<dbReference type="Pfam" id="PF01128">
    <property type="entry name" value="IspD"/>
    <property type="match status" value="1"/>
</dbReference>
<dbReference type="Pfam" id="PF02542">
    <property type="entry name" value="YgbB"/>
    <property type="match status" value="1"/>
</dbReference>
<dbReference type="SUPFAM" id="SSF69765">
    <property type="entry name" value="IpsF-like"/>
    <property type="match status" value="1"/>
</dbReference>
<dbReference type="SUPFAM" id="SSF53448">
    <property type="entry name" value="Nucleotide-diphospho-sugar transferases"/>
    <property type="match status" value="1"/>
</dbReference>
<dbReference type="PROSITE" id="PS01295">
    <property type="entry name" value="ISPD"/>
    <property type="match status" value="1"/>
</dbReference>
<dbReference type="PROSITE" id="PS01350">
    <property type="entry name" value="ISPF"/>
    <property type="match status" value="1"/>
</dbReference>
<proteinExistence type="inferred from homology"/>
<comment type="function">
    <text evidence="1">Bifunctional enzyme that catalyzes the formation of 4-diphosphocytidyl-2-C-methyl-D-erythritol from CTP and 2-C-methyl-D-erythritol 4-phosphate (MEP) (IspD), and catalyzes the conversion of 4-diphosphocytidyl-2-C-methyl-D-erythritol 2-phosphate (CDP-ME2P) to 2-C-methyl-D-erythritol 2,4-cyclodiphosphate (ME-CPP) with a corresponding release of cytidine 5-monophosphate (CMP) (IspF).</text>
</comment>
<comment type="catalytic activity">
    <reaction evidence="1">
        <text>2-C-methyl-D-erythritol 4-phosphate + CTP + H(+) = 4-CDP-2-C-methyl-D-erythritol + diphosphate</text>
        <dbReference type="Rhea" id="RHEA:13429"/>
        <dbReference type="ChEBI" id="CHEBI:15378"/>
        <dbReference type="ChEBI" id="CHEBI:33019"/>
        <dbReference type="ChEBI" id="CHEBI:37563"/>
        <dbReference type="ChEBI" id="CHEBI:57823"/>
        <dbReference type="ChEBI" id="CHEBI:58262"/>
        <dbReference type="EC" id="2.7.7.60"/>
    </reaction>
</comment>
<comment type="catalytic activity">
    <reaction evidence="1">
        <text>4-CDP-2-C-methyl-D-erythritol 2-phosphate = 2-C-methyl-D-erythritol 2,4-cyclic diphosphate + CMP</text>
        <dbReference type="Rhea" id="RHEA:23864"/>
        <dbReference type="ChEBI" id="CHEBI:57919"/>
        <dbReference type="ChEBI" id="CHEBI:58483"/>
        <dbReference type="ChEBI" id="CHEBI:60377"/>
        <dbReference type="EC" id="4.6.1.12"/>
    </reaction>
</comment>
<comment type="cofactor">
    <cofactor evidence="1">
        <name>a divalent metal cation</name>
        <dbReference type="ChEBI" id="CHEBI:60240"/>
    </cofactor>
</comment>
<comment type="pathway">
    <text evidence="1">Isoprenoid biosynthesis; isopentenyl diphosphate biosynthesis via DXP pathway; isopentenyl diphosphate from 1-deoxy-D-xylulose 5-phosphate: step 2/6.</text>
</comment>
<comment type="pathway">
    <text evidence="1">Isoprenoid biosynthesis; isopentenyl diphosphate biosynthesis via DXP pathway; isopentenyl diphosphate from 1-deoxy-D-xylulose 5-phosphate: step 4/6.</text>
</comment>
<comment type="similarity">
    <text evidence="1">In the N-terminal section; belongs to the IspD/TarI cytidylyltransferase family. IspD subfamily.</text>
</comment>
<comment type="similarity">
    <text evidence="1">In the C-terminal section; belongs to the IspF family.</text>
</comment>
<evidence type="ECO:0000255" key="1">
    <source>
        <dbReference type="HAMAP-Rule" id="MF_01520"/>
    </source>
</evidence>